<proteinExistence type="inferred from homology"/>
<protein>
    <recommendedName>
        <fullName evidence="1">RNA-binding protein Hfq</fullName>
    </recommendedName>
</protein>
<reference key="1">
    <citation type="submission" date="2008-04" db="EMBL/GenBank/DDBJ databases">
        <title>Complete sequence of Clostridium botulinum strain Eklund.</title>
        <authorList>
            <person name="Brinkac L.M."/>
            <person name="Brown J.L."/>
            <person name="Bruce D."/>
            <person name="Detter C."/>
            <person name="Munk C."/>
            <person name="Smith L.A."/>
            <person name="Smith T.J."/>
            <person name="Sutton G."/>
            <person name="Brettin T.S."/>
        </authorList>
    </citation>
    <scope>NUCLEOTIDE SEQUENCE [LARGE SCALE GENOMIC DNA]</scope>
    <source>
        <strain>Eklund 17B / Type B</strain>
    </source>
</reference>
<sequence>MNKQQNNLQDIFLNSARKNKMPVTIYLSTGFQINGTVKGFDSFTVILDSEGKQMLIYKHAITTVTPEKPILFVDNES</sequence>
<gene>
    <name evidence="1" type="primary">hfq</name>
    <name type="ordered locus">CLL_A1816</name>
</gene>
<organism>
    <name type="scientific">Clostridium botulinum (strain Eklund 17B / Type B)</name>
    <dbReference type="NCBI Taxonomy" id="935198"/>
    <lineage>
        <taxon>Bacteria</taxon>
        <taxon>Bacillati</taxon>
        <taxon>Bacillota</taxon>
        <taxon>Clostridia</taxon>
        <taxon>Eubacteriales</taxon>
        <taxon>Clostridiaceae</taxon>
        <taxon>Clostridium</taxon>
    </lineage>
</organism>
<feature type="chain" id="PRO_1000135025" description="RNA-binding protein Hfq">
    <location>
        <begin position="1"/>
        <end position="77"/>
    </location>
</feature>
<feature type="domain" description="Sm" evidence="2">
    <location>
        <begin position="10"/>
        <end position="70"/>
    </location>
</feature>
<keyword id="KW-0694">RNA-binding</keyword>
<keyword id="KW-0346">Stress response</keyword>
<dbReference type="EMBL" id="CP001056">
    <property type="protein sequence ID" value="ACD23870.1"/>
    <property type="molecule type" value="Genomic_DNA"/>
</dbReference>
<dbReference type="SMR" id="B2TIB6"/>
<dbReference type="KEGG" id="cbk:CLL_A1816"/>
<dbReference type="PATRIC" id="fig|935198.13.peg.1762"/>
<dbReference type="HOGENOM" id="CLU_113688_0_2_9"/>
<dbReference type="Proteomes" id="UP000001195">
    <property type="component" value="Chromosome"/>
</dbReference>
<dbReference type="GO" id="GO:0005829">
    <property type="term" value="C:cytosol"/>
    <property type="evidence" value="ECO:0007669"/>
    <property type="project" value="TreeGrafter"/>
</dbReference>
<dbReference type="GO" id="GO:0003723">
    <property type="term" value="F:RNA binding"/>
    <property type="evidence" value="ECO:0007669"/>
    <property type="project" value="UniProtKB-UniRule"/>
</dbReference>
<dbReference type="GO" id="GO:0006355">
    <property type="term" value="P:regulation of DNA-templated transcription"/>
    <property type="evidence" value="ECO:0007669"/>
    <property type="project" value="InterPro"/>
</dbReference>
<dbReference type="GO" id="GO:0043487">
    <property type="term" value="P:regulation of RNA stability"/>
    <property type="evidence" value="ECO:0007669"/>
    <property type="project" value="TreeGrafter"/>
</dbReference>
<dbReference type="GO" id="GO:0045974">
    <property type="term" value="P:regulation of translation, ncRNA-mediated"/>
    <property type="evidence" value="ECO:0007669"/>
    <property type="project" value="TreeGrafter"/>
</dbReference>
<dbReference type="CDD" id="cd01716">
    <property type="entry name" value="Hfq"/>
    <property type="match status" value="1"/>
</dbReference>
<dbReference type="Gene3D" id="2.30.30.100">
    <property type="match status" value="1"/>
</dbReference>
<dbReference type="HAMAP" id="MF_00436">
    <property type="entry name" value="Hfq"/>
    <property type="match status" value="1"/>
</dbReference>
<dbReference type="InterPro" id="IPR005001">
    <property type="entry name" value="Hfq"/>
</dbReference>
<dbReference type="InterPro" id="IPR010920">
    <property type="entry name" value="LSM_dom_sf"/>
</dbReference>
<dbReference type="InterPro" id="IPR047575">
    <property type="entry name" value="Sm"/>
</dbReference>
<dbReference type="NCBIfam" id="TIGR02383">
    <property type="entry name" value="Hfq"/>
    <property type="match status" value="1"/>
</dbReference>
<dbReference type="PANTHER" id="PTHR34772">
    <property type="entry name" value="RNA-BINDING PROTEIN HFQ"/>
    <property type="match status" value="1"/>
</dbReference>
<dbReference type="PANTHER" id="PTHR34772:SF1">
    <property type="entry name" value="RNA-BINDING PROTEIN HFQ"/>
    <property type="match status" value="1"/>
</dbReference>
<dbReference type="Pfam" id="PF17209">
    <property type="entry name" value="Hfq"/>
    <property type="match status" value="1"/>
</dbReference>
<dbReference type="SUPFAM" id="SSF50182">
    <property type="entry name" value="Sm-like ribonucleoproteins"/>
    <property type="match status" value="1"/>
</dbReference>
<dbReference type="PROSITE" id="PS52002">
    <property type="entry name" value="SM"/>
    <property type="match status" value="1"/>
</dbReference>
<comment type="function">
    <text evidence="1">RNA chaperone that binds small regulatory RNA (sRNAs) and mRNAs to facilitate mRNA translational regulation in response to envelope stress, environmental stress and changes in metabolite concentrations. Also binds with high specificity to tRNAs.</text>
</comment>
<comment type="subunit">
    <text evidence="1">Homohexamer.</text>
</comment>
<comment type="similarity">
    <text evidence="1">Belongs to the Hfq family.</text>
</comment>
<accession>B2TIB6</accession>
<evidence type="ECO:0000255" key="1">
    <source>
        <dbReference type="HAMAP-Rule" id="MF_00436"/>
    </source>
</evidence>
<evidence type="ECO:0000255" key="2">
    <source>
        <dbReference type="PROSITE-ProRule" id="PRU01346"/>
    </source>
</evidence>
<name>HFQ_CLOBB</name>